<accession>A4GCR7</accession>
<keyword id="KW-0009">Actin-binding</keyword>
<keyword id="KW-0020">Allergen</keyword>
<keyword id="KW-0963">Cytoplasm</keyword>
<keyword id="KW-0206">Cytoskeleton</keyword>
<keyword id="KW-1015">Disulfide bond</keyword>
<keyword id="KW-0597">Phosphoprotein</keyword>
<feature type="initiator methionine" description="Removed" evidence="1">
    <location>
        <position position="1"/>
    </location>
</feature>
<feature type="chain" id="PRO_0000424981" description="Profilin-4">
    <location>
        <begin position="2"/>
        <end position="134"/>
    </location>
</feature>
<feature type="short sequence motif" description="Involved in PIP2 interaction">
    <location>
        <begin position="84"/>
        <end position="100"/>
    </location>
</feature>
<feature type="modified residue" description="Phosphothreonine" evidence="1">
    <location>
        <position position="114"/>
    </location>
</feature>
<feature type="disulfide bond" evidence="3">
    <location>
        <begin position="13"/>
        <end position="118"/>
    </location>
</feature>
<organism>
    <name type="scientific">Olea europaea</name>
    <name type="common">Common olive</name>
    <dbReference type="NCBI Taxonomy" id="4146"/>
    <lineage>
        <taxon>Eukaryota</taxon>
        <taxon>Viridiplantae</taxon>
        <taxon>Streptophyta</taxon>
        <taxon>Embryophyta</taxon>
        <taxon>Tracheophyta</taxon>
        <taxon>Spermatophyta</taxon>
        <taxon>Magnoliopsida</taxon>
        <taxon>eudicotyledons</taxon>
        <taxon>Gunneridae</taxon>
        <taxon>Pentapetalae</taxon>
        <taxon>asterids</taxon>
        <taxon>lamiids</taxon>
        <taxon>Lamiales</taxon>
        <taxon>Oleaceae</taxon>
        <taxon>Oleeae</taxon>
        <taxon>Olea</taxon>
    </lineage>
</organism>
<sequence>MSWQAYVDDHLMCDIEGHEDHRLTAAAIVGHDGSVWAQSATFPQFKPVEMNGIMTDFNEPGHLAPTGLHLGGTKYMVIQGEAGAVIRGKKGSGGITIKKTGQALVFGIYEEPVTPGQCNMVVERLGDYLIEQGL</sequence>
<name>PROFP_OLEEU</name>
<protein>
    <recommendedName>
        <fullName>Profilin-4</fullName>
    </recommendedName>
    <alternativeName>
        <fullName>Pollen allergen Ole e 2</fullName>
    </alternativeName>
    <allergenName>Ole e 2</allergenName>
</protein>
<evidence type="ECO:0000250" key="1"/>
<evidence type="ECO:0000305" key="2"/>
<evidence type="ECO:0000305" key="3">
    <source>
    </source>
</evidence>
<proteinExistence type="evidence at protein level"/>
<reference key="1">
    <citation type="journal article" date="2012" name="PLoS ONE">
        <title>Characterization of profilin polymorphism in pollen with a focus on multifunctionality.</title>
        <authorList>
            <person name="Jimenez-Lopez J.C."/>
            <person name="Morales S."/>
            <person name="Castro A.J."/>
            <person name="Volkmann D."/>
            <person name="Rodriguez-Garcia M.I."/>
            <person name="Alche Jde D."/>
        </authorList>
    </citation>
    <scope>NUCLEOTIDE SEQUENCE [MRNA]</scope>
    <scope>POLYMORPHISM</scope>
    <source>
        <strain>cv. Lechin de Sevilla</strain>
        <tissue>Pollen</tissue>
    </source>
</reference>
<reference key="2">
    <citation type="journal article" date="2013" name="PLoS ONE">
        <title>Analysis of the effects of polymorphism on pollen profilin structural functionality and the generation of conformational, T- and B-cell epitopes.</title>
        <authorList>
            <person name="Jimenez-Lopez J.C."/>
            <person name="Rodriguez-Garcia M.I."/>
            <person name="Alche J.D."/>
        </authorList>
    </citation>
    <scope>3D-STRUCTURE MODELING</scope>
    <scope>DISULFIDE BOND</scope>
</reference>
<comment type="function">
    <text evidence="1">Binds to actin and affects the structure of the cytoskeleton. At high concentrations, profilin prevents the polymerization of actin, whereas it enhances it at low concentrations (By similarity).</text>
</comment>
<comment type="subunit">
    <text evidence="1">Occurs in many kinds of cells as a complex with monomeric actin in a 1:1 ratio.</text>
</comment>
<comment type="subcellular location">
    <subcellularLocation>
        <location evidence="1">Cytoplasm</location>
        <location evidence="1">Cytoskeleton</location>
    </subcellularLocation>
</comment>
<comment type="PTM">
    <text evidence="1">Phosphorylated by MAP kinases.</text>
</comment>
<comment type="polymorphism">
    <text>Several isoforms of the allergen exist due to polymorphism.</text>
</comment>
<comment type="allergen">
    <text>Causes an allergic reaction in human.</text>
</comment>
<comment type="miscellaneous">
    <text evidence="3">The variability of the residues taking part of IgE-binding epitopes might be responsible of the difference in cross-reactivity among olive pollen cultivars, and between distantly related pollen species, leading to a variable range of allergy reactions among atopic patients.</text>
</comment>
<comment type="similarity">
    <text evidence="2">Belongs to the profilin family.</text>
</comment>
<dbReference type="EMBL" id="DQ061978">
    <property type="protein sequence ID" value="AAZ08566.1"/>
    <property type="molecule type" value="mRNA"/>
</dbReference>
<dbReference type="SMR" id="A4GCR7"/>
<dbReference type="Allergome" id="490">
    <property type="allergen name" value="Ole e 2"/>
</dbReference>
<dbReference type="GO" id="GO:0005938">
    <property type="term" value="C:cell cortex"/>
    <property type="evidence" value="ECO:0007669"/>
    <property type="project" value="TreeGrafter"/>
</dbReference>
<dbReference type="GO" id="GO:0005856">
    <property type="term" value="C:cytoskeleton"/>
    <property type="evidence" value="ECO:0007669"/>
    <property type="project" value="UniProtKB-SubCell"/>
</dbReference>
<dbReference type="GO" id="GO:0003785">
    <property type="term" value="F:actin monomer binding"/>
    <property type="evidence" value="ECO:0007669"/>
    <property type="project" value="TreeGrafter"/>
</dbReference>
<dbReference type="CDD" id="cd00148">
    <property type="entry name" value="PROF"/>
    <property type="match status" value="1"/>
</dbReference>
<dbReference type="FunFam" id="3.30.450.30:FF:000001">
    <property type="entry name" value="Profilin"/>
    <property type="match status" value="1"/>
</dbReference>
<dbReference type="Gene3D" id="3.30.450.30">
    <property type="entry name" value="Dynein light chain 2a, cytoplasmic"/>
    <property type="match status" value="1"/>
</dbReference>
<dbReference type="InterPro" id="IPR048278">
    <property type="entry name" value="PFN"/>
</dbReference>
<dbReference type="InterPro" id="IPR005455">
    <property type="entry name" value="PFN_euk"/>
</dbReference>
<dbReference type="InterPro" id="IPR036140">
    <property type="entry name" value="PFN_sf"/>
</dbReference>
<dbReference type="InterPro" id="IPR027310">
    <property type="entry name" value="Profilin_CS"/>
</dbReference>
<dbReference type="PANTHER" id="PTHR11604">
    <property type="entry name" value="PROFILIN"/>
    <property type="match status" value="1"/>
</dbReference>
<dbReference type="PANTHER" id="PTHR11604:SF25">
    <property type="entry name" value="PROFILIN-5"/>
    <property type="match status" value="1"/>
</dbReference>
<dbReference type="Pfam" id="PF00235">
    <property type="entry name" value="Profilin"/>
    <property type="match status" value="1"/>
</dbReference>
<dbReference type="PRINTS" id="PR00392">
    <property type="entry name" value="PROFILIN"/>
</dbReference>
<dbReference type="PRINTS" id="PR01640">
    <property type="entry name" value="PROFILINPLNT"/>
</dbReference>
<dbReference type="SMART" id="SM00392">
    <property type="entry name" value="PROF"/>
    <property type="match status" value="1"/>
</dbReference>
<dbReference type="SUPFAM" id="SSF55770">
    <property type="entry name" value="Profilin (actin-binding protein)"/>
    <property type="match status" value="1"/>
</dbReference>
<dbReference type="PROSITE" id="PS00414">
    <property type="entry name" value="PROFILIN"/>
    <property type="match status" value="1"/>
</dbReference>